<keyword id="KW-0217">Developmental protein</keyword>
<keyword id="KW-0328">Glycosyltransferase</keyword>
<keyword id="KW-0333">Golgi apparatus</keyword>
<keyword id="KW-0444">Lipid biosynthesis</keyword>
<keyword id="KW-0443">Lipid metabolism</keyword>
<keyword id="KW-0472">Membrane</keyword>
<keyword id="KW-1185">Reference proteome</keyword>
<keyword id="KW-0746">Sphingolipid metabolism</keyword>
<keyword id="KW-0808">Transferase</keyword>
<keyword id="KW-0812">Transmembrane</keyword>
<keyword id="KW-1133">Transmembrane helix</keyword>
<dbReference type="EC" id="2.4.1.80"/>
<dbReference type="EMBL" id="BC084966">
    <property type="protein sequence ID" value="AAH84966.1"/>
    <property type="molecule type" value="mRNA"/>
</dbReference>
<dbReference type="RefSeq" id="NP_001088566.1">
    <property type="nucleotide sequence ID" value="NM_001095097.1"/>
</dbReference>
<dbReference type="SMR" id="Q5U4S8"/>
<dbReference type="GeneID" id="495444"/>
<dbReference type="KEGG" id="xla:495444"/>
<dbReference type="AGR" id="Xenbase:XB-GENE-944700"/>
<dbReference type="CTD" id="495444"/>
<dbReference type="Xenbase" id="XB-GENE-944700">
    <property type="gene designation" value="ugcg.S"/>
</dbReference>
<dbReference type="OrthoDB" id="1483400at2759"/>
<dbReference type="UniPathway" id="UPA00222"/>
<dbReference type="Proteomes" id="UP000186698">
    <property type="component" value="Chromosome 1S"/>
</dbReference>
<dbReference type="Bgee" id="495444">
    <property type="expression patterns" value="Expressed in zone of skin and 19 other cell types or tissues"/>
</dbReference>
<dbReference type="GO" id="GO:0005794">
    <property type="term" value="C:Golgi apparatus"/>
    <property type="evidence" value="ECO:0000250"/>
    <property type="project" value="UniProtKB"/>
</dbReference>
<dbReference type="GO" id="GO:0000139">
    <property type="term" value="C:Golgi membrane"/>
    <property type="evidence" value="ECO:0007669"/>
    <property type="project" value="UniProtKB-SubCell"/>
</dbReference>
<dbReference type="GO" id="GO:0016020">
    <property type="term" value="C:membrane"/>
    <property type="evidence" value="ECO:0000318"/>
    <property type="project" value="GO_Central"/>
</dbReference>
<dbReference type="GO" id="GO:0008120">
    <property type="term" value="F:ceramide glucosyltransferase activity"/>
    <property type="evidence" value="ECO:0000250"/>
    <property type="project" value="UniProtKB"/>
</dbReference>
<dbReference type="GO" id="GO:0006679">
    <property type="term" value="P:glucosylceramide biosynthetic process"/>
    <property type="evidence" value="ECO:0000318"/>
    <property type="project" value="GO_Central"/>
</dbReference>
<dbReference type="GO" id="GO:0046479">
    <property type="term" value="P:glycosphingolipid catabolic process"/>
    <property type="evidence" value="ECO:0000250"/>
    <property type="project" value="UniProtKB"/>
</dbReference>
<dbReference type="CDD" id="cd02520">
    <property type="entry name" value="Glucosylceramide_synthase"/>
    <property type="match status" value="1"/>
</dbReference>
<dbReference type="FunFam" id="3.90.550.10:FF:000041">
    <property type="entry name" value="UDP-glucose ceramide glucosyltransferase"/>
    <property type="match status" value="1"/>
</dbReference>
<dbReference type="Gene3D" id="3.90.550.10">
    <property type="entry name" value="Spore Coat Polysaccharide Biosynthesis Protein SpsA, Chain A"/>
    <property type="match status" value="1"/>
</dbReference>
<dbReference type="InterPro" id="IPR025993">
    <property type="entry name" value="Ceramide_glucosylTrfase"/>
</dbReference>
<dbReference type="InterPro" id="IPR029044">
    <property type="entry name" value="Nucleotide-diphossugar_trans"/>
</dbReference>
<dbReference type="PANTHER" id="PTHR12726">
    <property type="entry name" value="CERAMIDE GLUCOSYLTRANSFERASE"/>
    <property type="match status" value="1"/>
</dbReference>
<dbReference type="PANTHER" id="PTHR12726:SF0">
    <property type="entry name" value="CERAMIDE GLUCOSYLTRANSFERASE"/>
    <property type="match status" value="1"/>
</dbReference>
<dbReference type="Pfam" id="PF13506">
    <property type="entry name" value="Glyco_transf_21"/>
    <property type="match status" value="1"/>
</dbReference>
<dbReference type="SUPFAM" id="SSF53448">
    <property type="entry name" value="Nucleotide-diphospho-sugar transferases"/>
    <property type="match status" value="1"/>
</dbReference>
<sequence length="394" mass="44607">MAVLDLALQGLAIFGCILFFVLWFMHFLSIVYTRLHLNKKVSDKQPYSKLPGVSLLKPLKGVDSNLINNLETFFELDYPKFEILLCVQDLDDPAVDVCKKLLGKYPSVDAKLFIGGKKVGINPKINNLMPGYEVAKYDLIWICDSGIKVKPDTLTDMANQMTEKVGLVHGLPYVADRQGFAATLEQVYFGTSHPRSYISANVTGIKCVTGMSCLMRKEVLDQAGGLIAFAQYIAEDYFMAKAIADRGWKFSMATQVAMQNSGCYSISQFQSRMIRWAKLRINMLPATIICEPISECFVASLIIGWAAHHIFRWDIMVFFMCHCLAWFIFDYIQLRGVQGGPLNFSKLDYAVAWFIRESMTIYIFLSALWDPTISWRTGRYRLRCGGTAEEILDV</sequence>
<gene>
    <name type="primary">ugcg-b</name>
    <name type="synonym">ugcg</name>
</gene>
<evidence type="ECO:0000250" key="1">
    <source>
        <dbReference type="UniProtKB" id="Q16739"/>
    </source>
</evidence>
<evidence type="ECO:0000250" key="2">
    <source>
        <dbReference type="UniProtKB" id="Q8AY29"/>
    </source>
</evidence>
<evidence type="ECO:0000250" key="3">
    <source>
        <dbReference type="UniProtKB" id="Q9R0E0"/>
    </source>
</evidence>
<evidence type="ECO:0000255" key="4"/>
<evidence type="ECO:0000305" key="5"/>
<evidence type="ECO:0000312" key="6">
    <source>
        <dbReference type="EMBL" id="AAH84966.1"/>
    </source>
</evidence>
<accession>Q5U4S8</accession>
<comment type="function">
    <text evidence="1 2">Participates in the initial step of the glucosylceramide-based glycosphingolipid/GSL synthetic pathway at the cytosolic surface of the Golgi. Catalyzes the transfer of glucose from UDP-glucose to ceramide to produce glucosylceramide/GlcCer (such as beta-D-glucosyl-(1&lt;-&gt;1')-N-acylsphing-4-enine). Glucosylceramide is the core component of glycosphingolipids/GSLs, amphipathic molecules consisting of a ceramide lipid moiety embedded in the outer leaflet of the membrane, linked to one of hundreds of different externally oriented oligosaccharide structures. Glycosphingolipids are essential components of membrane microdomains that mediate membrane trafficking and signal transduction. They are implicated in many fundamental cellular processes, including growth, differentiation, migration, morphogenesis, cell-to-cell and cell-to-matrix interactions (By similarity). Catalyzes the synthesis of xylosylceramide/XylCer (such as beta-D-xylosyl-(1&lt;-&gt;1')-N-acylsphing-4-enine) using UDP-Xyl as xylose donor (By similarity).</text>
</comment>
<comment type="catalytic activity">
    <reaction evidence="2">
        <text>an N-acylsphing-4-enine + UDP-alpha-D-glucose = a beta-D-glucosyl-(1&lt;-&gt;1')-N-acylsphing-4-enine + UDP + H(+)</text>
        <dbReference type="Rhea" id="RHEA:12088"/>
        <dbReference type="ChEBI" id="CHEBI:15378"/>
        <dbReference type="ChEBI" id="CHEBI:22801"/>
        <dbReference type="ChEBI" id="CHEBI:52639"/>
        <dbReference type="ChEBI" id="CHEBI:58223"/>
        <dbReference type="ChEBI" id="CHEBI:58885"/>
        <dbReference type="EC" id="2.4.1.80"/>
    </reaction>
    <physiologicalReaction direction="left-to-right" evidence="2">
        <dbReference type="Rhea" id="RHEA:12089"/>
    </physiologicalReaction>
</comment>
<comment type="catalytic activity">
    <reaction evidence="1">
        <text>UDP-alpha-D-xylose + an N-acylsphing-4-enine = a beta-D-xylosyl-(1&lt;-&gt;1')-N-acylsphing-4-enine + UDP + H(+)</text>
        <dbReference type="Rhea" id="RHEA:70243"/>
        <dbReference type="ChEBI" id="CHEBI:15378"/>
        <dbReference type="ChEBI" id="CHEBI:52639"/>
        <dbReference type="ChEBI" id="CHEBI:57632"/>
        <dbReference type="ChEBI" id="CHEBI:58223"/>
        <dbReference type="ChEBI" id="CHEBI:189068"/>
    </reaction>
    <physiologicalReaction direction="left-to-right" evidence="1">
        <dbReference type="Rhea" id="RHEA:70244"/>
    </physiologicalReaction>
</comment>
<comment type="catalytic activity">
    <reaction evidence="1">
        <text>N-(9Z-octadecenoyl)-sphing-4-enine + UDP-alpha-D-xylose = beta-D-xylosyl-(1&lt;-&gt;1')-N-(9Z-octadecenoyl)-sphing-4-enine + UDP + H(+)</text>
        <dbReference type="Rhea" id="RHEA:70247"/>
        <dbReference type="ChEBI" id="CHEBI:15378"/>
        <dbReference type="ChEBI" id="CHEBI:57632"/>
        <dbReference type="ChEBI" id="CHEBI:58223"/>
        <dbReference type="ChEBI" id="CHEBI:77996"/>
        <dbReference type="ChEBI" id="CHEBI:189081"/>
    </reaction>
    <physiologicalReaction direction="left-to-right" evidence="1">
        <dbReference type="Rhea" id="RHEA:70248"/>
    </physiologicalReaction>
</comment>
<comment type="pathway">
    <text evidence="2">Lipid metabolism; sphingolipid metabolism.</text>
</comment>
<comment type="subcellular location">
    <subcellularLocation>
        <location evidence="2 4">Golgi apparatus membrane</location>
        <topology evidence="2 4">Multi-pass membrane protein</topology>
    </subcellularLocation>
</comment>
<comment type="domain">
    <text evidence="3">The D1, D2, D3, (Q/R)XXRW motif is a critical part of the GCS active site, involved in catalysis and UDP-sugar binding.</text>
</comment>
<comment type="similarity">
    <text evidence="4">Belongs to the glycosyltransferase 2 family.</text>
</comment>
<reference evidence="6" key="1">
    <citation type="submission" date="2004-10" db="EMBL/GenBank/DDBJ databases">
        <authorList>
            <consortium name="NIH - Xenopus Gene Collection (XGC) project"/>
        </authorList>
    </citation>
    <scope>NUCLEOTIDE SEQUENCE [LARGE SCALE MRNA]</scope>
    <source>
        <tissue evidence="6">Brain</tissue>
    </source>
</reference>
<proteinExistence type="evidence at transcript level"/>
<organism>
    <name type="scientific">Xenopus laevis</name>
    <name type="common">African clawed frog</name>
    <dbReference type="NCBI Taxonomy" id="8355"/>
    <lineage>
        <taxon>Eukaryota</taxon>
        <taxon>Metazoa</taxon>
        <taxon>Chordata</taxon>
        <taxon>Craniata</taxon>
        <taxon>Vertebrata</taxon>
        <taxon>Euteleostomi</taxon>
        <taxon>Amphibia</taxon>
        <taxon>Batrachia</taxon>
        <taxon>Anura</taxon>
        <taxon>Pipoidea</taxon>
        <taxon>Pipidae</taxon>
        <taxon>Xenopodinae</taxon>
        <taxon>Xenopus</taxon>
        <taxon>Xenopus</taxon>
    </lineage>
</organism>
<feature type="chain" id="PRO_0000376855" description="Ceramide glucosyltransferase-B">
    <location>
        <begin position="1"/>
        <end position="394"/>
    </location>
</feature>
<feature type="topological domain" description="Lumenal" evidence="4">
    <location>
        <begin position="1"/>
        <end position="10"/>
    </location>
</feature>
<feature type="transmembrane region" description="Helical" evidence="4">
    <location>
        <begin position="11"/>
        <end position="32"/>
    </location>
</feature>
<feature type="topological domain" description="Cytoplasmic" evidence="4">
    <location>
        <begin position="33"/>
        <end position="195"/>
    </location>
</feature>
<feature type="transmembrane region" description="Helical" evidence="4">
    <location>
        <begin position="196"/>
        <end position="215"/>
    </location>
</feature>
<feature type="topological domain" description="Lumenal" evidence="4">
    <location>
        <begin position="216"/>
        <end position="287"/>
    </location>
</feature>
<feature type="transmembrane region" description="Helical" evidence="4">
    <location>
        <begin position="288"/>
        <end position="304"/>
    </location>
</feature>
<feature type="topological domain" description="Cytoplasmic" evidence="4">
    <location>
        <begin position="305"/>
        <end position="309"/>
    </location>
</feature>
<feature type="transmembrane region" description="Helical" evidence="4">
    <location>
        <begin position="310"/>
        <end position="328"/>
    </location>
</feature>
<feature type="topological domain" description="Lumenal" evidence="4">
    <location>
        <begin position="329"/>
        <end position="348"/>
    </location>
</feature>
<feature type="transmembrane region" description="Helical" evidence="4">
    <location>
        <begin position="349"/>
        <end position="369"/>
    </location>
</feature>
<feature type="topological domain" description="Cytoplasmic" evidence="4">
    <location>
        <begin position="370"/>
        <end position="394"/>
    </location>
</feature>
<feature type="short sequence motif" description="D1" evidence="5">
    <location>
        <position position="92"/>
    </location>
</feature>
<feature type="short sequence motif" description="D2" evidence="5">
    <location>
        <position position="144"/>
    </location>
</feature>
<feature type="short sequence motif" description="D3" evidence="5">
    <location>
        <position position="236"/>
    </location>
</feature>
<feature type="short sequence motif" description="(Q/R)XXRW" evidence="5">
    <location>
        <begin position="272"/>
        <end position="276"/>
    </location>
</feature>
<feature type="active site" description="Proton acceptor" evidence="3">
    <location>
        <position position="236"/>
    </location>
</feature>
<name>CEGTB_XENLA</name>
<protein>
    <recommendedName>
        <fullName>Ceramide glucosyltransferase-B</fullName>
        <ecNumber>2.4.1.80</ecNumber>
    </recommendedName>
    <alternativeName>
        <fullName evidence="5">Glycosylceramide synthase-B</fullName>
    </alternativeName>
    <alternativeName>
        <fullName evidence="2">UDP-glucose ceramide glucosyltransferase-B</fullName>
    </alternativeName>
</protein>